<name>RPOA_CHAVU</name>
<feature type="chain" id="PRO_0000275684" description="DNA-directed RNA polymerase subunit alpha">
    <location>
        <begin position="1"/>
        <end position="358"/>
    </location>
</feature>
<feature type="region of interest" description="Alpha N-terminal domain (alpha-NTD)" evidence="1">
    <location>
        <begin position="1"/>
        <end position="231"/>
    </location>
</feature>
<feature type="region of interest" description="Alpha C-terminal domain (alpha-CTD)" evidence="1">
    <location>
        <begin position="266"/>
        <end position="358"/>
    </location>
</feature>
<keyword id="KW-0150">Chloroplast</keyword>
<keyword id="KW-0240">DNA-directed RNA polymerase</keyword>
<keyword id="KW-0548">Nucleotidyltransferase</keyword>
<keyword id="KW-0934">Plastid</keyword>
<keyword id="KW-0804">Transcription</keyword>
<keyword id="KW-0808">Transferase</keyword>
<proteinExistence type="inferred from homology"/>
<protein>
    <recommendedName>
        <fullName evidence="1">DNA-directed RNA polymerase subunit alpha</fullName>
        <shortName evidence="1">PEP</shortName>
        <ecNumber evidence="1">2.7.7.6</ecNumber>
    </recommendedName>
    <alternativeName>
        <fullName evidence="1">Plastid-encoded RNA polymerase subunit alpha</fullName>
        <shortName evidence="1">RNA polymerase subunit alpha</shortName>
    </alternativeName>
</protein>
<dbReference type="EC" id="2.7.7.6" evidence="1"/>
<dbReference type="EMBL" id="DQ229107">
    <property type="protein sequence ID" value="ABA61981.1"/>
    <property type="molecule type" value="Genomic_DNA"/>
</dbReference>
<dbReference type="RefSeq" id="YP_635780.1">
    <property type="nucleotide sequence ID" value="NC_008097.1"/>
</dbReference>
<dbReference type="SMR" id="Q1ACG7"/>
<dbReference type="GeneID" id="4100251"/>
<dbReference type="GO" id="GO:0009507">
    <property type="term" value="C:chloroplast"/>
    <property type="evidence" value="ECO:0007669"/>
    <property type="project" value="UniProtKB-SubCell"/>
</dbReference>
<dbReference type="GO" id="GO:0000428">
    <property type="term" value="C:DNA-directed RNA polymerase complex"/>
    <property type="evidence" value="ECO:0007669"/>
    <property type="project" value="UniProtKB-KW"/>
</dbReference>
<dbReference type="GO" id="GO:0005739">
    <property type="term" value="C:mitochondrion"/>
    <property type="evidence" value="ECO:0007669"/>
    <property type="project" value="GOC"/>
</dbReference>
<dbReference type="GO" id="GO:0003677">
    <property type="term" value="F:DNA binding"/>
    <property type="evidence" value="ECO:0007669"/>
    <property type="project" value="UniProtKB-UniRule"/>
</dbReference>
<dbReference type="GO" id="GO:0003899">
    <property type="term" value="F:DNA-directed RNA polymerase activity"/>
    <property type="evidence" value="ECO:0007669"/>
    <property type="project" value="UniProtKB-UniRule"/>
</dbReference>
<dbReference type="GO" id="GO:0046983">
    <property type="term" value="F:protein dimerization activity"/>
    <property type="evidence" value="ECO:0007669"/>
    <property type="project" value="InterPro"/>
</dbReference>
<dbReference type="GO" id="GO:0006351">
    <property type="term" value="P:DNA-templated transcription"/>
    <property type="evidence" value="ECO:0007669"/>
    <property type="project" value="UniProtKB-UniRule"/>
</dbReference>
<dbReference type="CDD" id="cd06928">
    <property type="entry name" value="RNAP_alpha_NTD"/>
    <property type="match status" value="1"/>
</dbReference>
<dbReference type="FunFam" id="2.170.120.12:FF:000001">
    <property type="entry name" value="DNA-directed RNA polymerase subunit alpha"/>
    <property type="match status" value="1"/>
</dbReference>
<dbReference type="Gene3D" id="1.10.150.20">
    <property type="entry name" value="5' to 3' exonuclease, C-terminal subdomain"/>
    <property type="match status" value="1"/>
</dbReference>
<dbReference type="Gene3D" id="2.170.120.12">
    <property type="entry name" value="DNA-directed RNA polymerase, insert domain"/>
    <property type="match status" value="1"/>
</dbReference>
<dbReference type="Gene3D" id="3.30.1360.10">
    <property type="entry name" value="RNA polymerase, RBP11-like subunit"/>
    <property type="match status" value="1"/>
</dbReference>
<dbReference type="HAMAP" id="MF_00059">
    <property type="entry name" value="RNApol_bact_RpoA"/>
    <property type="match status" value="1"/>
</dbReference>
<dbReference type="InterPro" id="IPR011262">
    <property type="entry name" value="DNA-dir_RNA_pol_insert"/>
</dbReference>
<dbReference type="InterPro" id="IPR011263">
    <property type="entry name" value="DNA-dir_RNA_pol_RpoA/D/Rpb3"/>
</dbReference>
<dbReference type="InterPro" id="IPR011773">
    <property type="entry name" value="DNA-dir_RpoA"/>
</dbReference>
<dbReference type="InterPro" id="IPR036603">
    <property type="entry name" value="RBP11-like"/>
</dbReference>
<dbReference type="InterPro" id="IPR011260">
    <property type="entry name" value="RNAP_asu_C"/>
</dbReference>
<dbReference type="InterPro" id="IPR036643">
    <property type="entry name" value="RNApol_insert_sf"/>
</dbReference>
<dbReference type="NCBIfam" id="TIGR02027">
    <property type="entry name" value="rpoA"/>
    <property type="match status" value="1"/>
</dbReference>
<dbReference type="Pfam" id="PF01000">
    <property type="entry name" value="RNA_pol_A_bac"/>
    <property type="match status" value="1"/>
</dbReference>
<dbReference type="Pfam" id="PF03118">
    <property type="entry name" value="RNA_pol_A_CTD"/>
    <property type="match status" value="1"/>
</dbReference>
<dbReference type="Pfam" id="PF01193">
    <property type="entry name" value="RNA_pol_L"/>
    <property type="match status" value="1"/>
</dbReference>
<dbReference type="SMART" id="SM00662">
    <property type="entry name" value="RPOLD"/>
    <property type="match status" value="1"/>
</dbReference>
<dbReference type="SUPFAM" id="SSF47789">
    <property type="entry name" value="C-terminal domain of RNA polymerase alpha subunit"/>
    <property type="match status" value="1"/>
</dbReference>
<dbReference type="SUPFAM" id="SSF56553">
    <property type="entry name" value="Insert subdomain of RNA polymerase alpha subunit"/>
    <property type="match status" value="1"/>
</dbReference>
<dbReference type="SUPFAM" id="SSF55257">
    <property type="entry name" value="RBP11-like subunits of RNA polymerase"/>
    <property type="match status" value="1"/>
</dbReference>
<accession>Q1ACG7</accession>
<evidence type="ECO:0000255" key="1">
    <source>
        <dbReference type="HAMAP-Rule" id="MF_00059"/>
    </source>
</evidence>
<gene>
    <name evidence="1" type="primary">rpoA</name>
</gene>
<geneLocation type="chloroplast"/>
<organism>
    <name type="scientific">Chara vulgaris</name>
    <name type="common">Common stonewort</name>
    <dbReference type="NCBI Taxonomy" id="55564"/>
    <lineage>
        <taxon>Eukaryota</taxon>
        <taxon>Viridiplantae</taxon>
        <taxon>Streptophyta</taxon>
        <taxon>Charophyceae</taxon>
        <taxon>Charales</taxon>
        <taxon>Characeae</taxon>
        <taxon>Chara</taxon>
    </lineage>
</organism>
<sequence length="358" mass="41168">MIQNVTDDKIQWKCLESKIESQRIHYGRFAIAPLKKGQANTLGITLRRTLLSDLDGICITSVKIDNIKHEYCTLTGVRESIQDILLNLKEIVFKGVCDKTQKGFIFVKGPKKITASDIQIEPCIEILDSNQIIAHLTEPIDFKVELTIEKSMGFRLQNATQISKDSFSIDAIFMPIRNVNYSIHPVEKAGDWKSELLILEIWTNGSITPKEAFHQASEKIMNIFLSLSNSSDNQIQEKSTKNFEEKEEFIFQNIDGFKQDKETKVQESLGWKKISINQLELSARAYNCLKNEKISTLFDLLNYSQEDLLKIKNFGKRSFEQVVNALEKHFDMKLSKDSSKKFYEQLKNLELINNKDIS</sequence>
<reference key="1">
    <citation type="journal article" date="2006" name="Mol. Biol. Evol.">
        <title>The chloroplast genome sequence of Chara vulgaris sheds new light into the closest green algal relatives of land plants.</title>
        <authorList>
            <person name="Turmel M."/>
            <person name="Otis C."/>
            <person name="Lemieux C."/>
        </authorList>
    </citation>
    <scope>NUCLEOTIDE SEQUENCE [LARGE SCALE GENOMIC DNA]</scope>
</reference>
<comment type="function">
    <text evidence="1">DNA-dependent RNA polymerase catalyzes the transcription of DNA into RNA using the four ribonucleoside triphosphates as substrates.</text>
</comment>
<comment type="catalytic activity">
    <reaction evidence="1">
        <text>RNA(n) + a ribonucleoside 5'-triphosphate = RNA(n+1) + diphosphate</text>
        <dbReference type="Rhea" id="RHEA:21248"/>
        <dbReference type="Rhea" id="RHEA-COMP:14527"/>
        <dbReference type="Rhea" id="RHEA-COMP:17342"/>
        <dbReference type="ChEBI" id="CHEBI:33019"/>
        <dbReference type="ChEBI" id="CHEBI:61557"/>
        <dbReference type="ChEBI" id="CHEBI:140395"/>
        <dbReference type="EC" id="2.7.7.6"/>
    </reaction>
</comment>
<comment type="subunit">
    <text evidence="1">In plastids the minimal PEP RNA polymerase catalytic core is composed of four subunits: alpha, beta, beta', and beta''. When a (nuclear-encoded) sigma factor is associated with the core the holoenzyme is formed, which can initiate transcription.</text>
</comment>
<comment type="subcellular location">
    <subcellularLocation>
        <location>Plastid</location>
        <location>Chloroplast</location>
    </subcellularLocation>
</comment>
<comment type="domain">
    <text evidence="1">The N-terminal domain is essential for RNAP assembly and basal transcription, whereas the C-terminal domain is involved in interaction with transcriptional regulators and with upstream promoter elements.</text>
</comment>
<comment type="similarity">
    <text evidence="1">Belongs to the RNA polymerase alpha chain family.</text>
</comment>